<evidence type="ECO:0000255" key="1">
    <source>
        <dbReference type="PROSITE-ProRule" id="PRU00068"/>
    </source>
</evidence>
<evidence type="ECO:0000269" key="2">
    <source>
    </source>
</evidence>
<evidence type="ECO:0000269" key="3">
    <source>
    </source>
</evidence>
<evidence type="ECO:0000269" key="4">
    <source>
    </source>
</evidence>
<evidence type="ECO:0000303" key="5">
    <source>
    </source>
</evidence>
<evidence type="ECO:0000303" key="6">
    <source>
    </source>
</evidence>
<evidence type="ECO:0000303" key="7">
    <source>
    </source>
</evidence>
<evidence type="ECO:0000305" key="8"/>
<evidence type="ECO:0000305" key="9">
    <source>
    </source>
</evidence>
<evidence type="ECO:0000305" key="10">
    <source>
    </source>
</evidence>
<reference key="1">
    <citation type="journal article" date="1999" name="Biochemistry">
        <title>Structural and functional characterization of EMF10, a heterodimeric disintegrin from Eristocophis macmahoni venom that selectively inhibits alpha 5 beta 1 integrin.</title>
        <authorList>
            <person name="Marcinkiewicz C."/>
            <person name="Calvete J.J."/>
            <person name="Vijay-Kumar S."/>
            <person name="Marcinkiewicz M.M."/>
            <person name="Raida M."/>
            <person name="Schick P."/>
            <person name="Lobb R.R."/>
            <person name="Niewiarowski S."/>
        </authorList>
    </citation>
    <scope>PROTEIN SEQUENCE</scope>
    <scope>FUNCTION</scope>
    <scope>VARIANTS LYS-35 AND 65-PHE--LYS-68 DEL</scope>
    <scope>SUBCELLULAR LOCATION</scope>
    <source>
        <tissue>Venom</tissue>
    </source>
</reference>
<reference key="2">
    <citation type="journal article" date="1992" name="Peptides">
        <title>Characterization of two platelet aggregation inhibitor-like polypeptides from viper venom.</title>
        <authorList>
            <person name="Siddiqi A.R."/>
            <person name="Persson B."/>
            <person name="Zaidi Z.H."/>
            <person name="Jornvall H."/>
        </authorList>
    </citation>
    <scope>PROTEIN SEQUENCE OF 5-65</scope>
    <scope>AMINO-ACID COMPOSITION</scope>
    <scope>VARIANT LYS-35</scope>
    <scope>SUBCELLULAR LOCATION</scope>
    <source>
        <tissue>Venom</tissue>
    </source>
</reference>
<reference key="3">
    <citation type="journal article" date="2000" name="Biochem. J.">
        <title>Disulphide-bond pattern and molecular modelling of the dimeric disintegrin EMF-10, a potent and selective integrin alpha5beta1 antagonist from Eristocophis macmahoni venom.</title>
        <authorList>
            <person name="Calvete J.J."/>
            <person name="Jurgens M."/>
            <person name="Marcinkiewicz C."/>
            <person name="Romero A."/>
            <person name="Schrader M."/>
            <person name="Niewiarowski S."/>
        </authorList>
    </citation>
    <scope>DISULFIDE BONDS</scope>
</reference>
<feature type="chain" id="PRO_0000101804" description="Disintegrin EMF10B" evidence="4">
    <location>
        <begin position="1"/>
        <end position="68"/>
    </location>
</feature>
<feature type="domain" description="Disintegrin" evidence="1">
    <location>
        <begin position="1"/>
        <end position="68"/>
    </location>
</feature>
<feature type="short sequence motif" description="Cell attachment site; atypical (MGD)">
    <location>
        <begin position="46"/>
        <end position="48"/>
    </location>
</feature>
<feature type="disulfide bond" evidence="3">
    <location>
        <begin position="10"/>
        <end position="33"/>
    </location>
</feature>
<feature type="disulfide bond" description="Interchain (with C-8 in EMF10A)" evidence="3">
    <location>
        <position position="11"/>
    </location>
</feature>
<feature type="disulfide bond" description="Interchain (with C-13 in EMF10A)" evidence="3">
    <location>
        <position position="16"/>
    </location>
</feature>
<feature type="disulfide bond" evidence="3">
    <location>
        <begin position="24"/>
        <end position="30"/>
    </location>
</feature>
<feature type="disulfide bond" evidence="3">
    <location>
        <begin position="29"/>
        <end position="54"/>
    </location>
</feature>
<feature type="disulfide bond" evidence="1 3">
    <location>
        <begin position="42"/>
        <end position="61"/>
    </location>
</feature>
<feature type="sequence variant" evidence="2 4">
    <original>F</original>
    <variation>K</variation>
    <location>
        <position position="35"/>
    </location>
</feature>
<feature type="sequence variant">
    <location>
        <begin position="65"/>
        <end position="68"/>
    </location>
</feature>
<feature type="sequence conflict" description="In Ref. 2; AA sequence." evidence="8" ref="2">
    <original>NSGN</original>
    <variation>ESAG</variation>
    <location>
        <begin position="5"/>
        <end position="8"/>
    </location>
</feature>
<accession>P81743</accession>
<keyword id="KW-1217">Cell adhesion impairing toxin</keyword>
<keyword id="KW-0903">Direct protein sequencing</keyword>
<keyword id="KW-1015">Disulfide bond</keyword>
<keyword id="KW-1199">Hemostasis impairing toxin</keyword>
<keyword id="KW-1201">Platelet aggregation inhibiting toxin</keyword>
<keyword id="KW-0964">Secreted</keyword>
<keyword id="KW-0800">Toxin</keyword>
<sequence>ELLQNSGNPCCDPVTCKPRRGEHCVSGPCCDNCKFLNAGTVCWPAMGDWNDDYCTGISSDCPRNPVFK</sequence>
<dbReference type="SMR" id="P81743"/>
<dbReference type="GO" id="GO:0005576">
    <property type="term" value="C:extracellular region"/>
    <property type="evidence" value="ECO:0007669"/>
    <property type="project" value="UniProtKB-SubCell"/>
</dbReference>
<dbReference type="GO" id="GO:0090729">
    <property type="term" value="F:toxin activity"/>
    <property type="evidence" value="ECO:0007669"/>
    <property type="project" value="UniProtKB-KW"/>
</dbReference>
<dbReference type="Gene3D" id="4.10.70.10">
    <property type="entry name" value="Disintegrin domain"/>
    <property type="match status" value="1"/>
</dbReference>
<dbReference type="InterPro" id="IPR001762">
    <property type="entry name" value="Disintegrin_dom"/>
</dbReference>
<dbReference type="InterPro" id="IPR036436">
    <property type="entry name" value="Disintegrin_dom_sf"/>
</dbReference>
<dbReference type="PANTHER" id="PTHR11905">
    <property type="entry name" value="ADAM A DISINTEGRIN AND METALLOPROTEASE DOMAIN"/>
    <property type="match status" value="1"/>
</dbReference>
<dbReference type="PANTHER" id="PTHR11905:SF159">
    <property type="entry name" value="ADAM METALLOPROTEASE"/>
    <property type="match status" value="1"/>
</dbReference>
<dbReference type="Pfam" id="PF00200">
    <property type="entry name" value="Disintegrin"/>
    <property type="match status" value="1"/>
</dbReference>
<dbReference type="PRINTS" id="PR00289">
    <property type="entry name" value="DISINTEGRIN"/>
</dbReference>
<dbReference type="SMART" id="SM00050">
    <property type="entry name" value="DISIN"/>
    <property type="match status" value="1"/>
</dbReference>
<dbReference type="SUPFAM" id="SSF57552">
    <property type="entry name" value="Blood coagulation inhibitor (disintegrin)"/>
    <property type="match status" value="1"/>
</dbReference>
<dbReference type="PROSITE" id="PS50214">
    <property type="entry name" value="DISINTEGRIN_2"/>
    <property type="match status" value="1"/>
</dbReference>
<proteinExistence type="evidence at protein level"/>
<organism>
    <name type="scientific">Eristicophis macmahoni</name>
    <name type="common">Leaf-nosed viper</name>
    <dbReference type="NCBI Taxonomy" id="110227"/>
    <lineage>
        <taxon>Eukaryota</taxon>
        <taxon>Metazoa</taxon>
        <taxon>Chordata</taxon>
        <taxon>Craniata</taxon>
        <taxon>Vertebrata</taxon>
        <taxon>Euteleostomi</taxon>
        <taxon>Lepidosauria</taxon>
        <taxon>Squamata</taxon>
        <taxon>Bifurcata</taxon>
        <taxon>Unidentata</taxon>
        <taxon>Episquamata</taxon>
        <taxon>Toxicofera</taxon>
        <taxon>Serpentes</taxon>
        <taxon>Colubroidea</taxon>
        <taxon>Viperidae</taxon>
        <taxon>Viperinae</taxon>
        <taxon>Eristicophis</taxon>
    </lineage>
</organism>
<comment type="function">
    <text evidence="2">Extremely potent and selective inhibitor of integrin alpha-5/beta-1 (ITGA5/ITGB1). Partially inhibits adhesion of cells expressing alpha-IIb/beta-3 (ITGA2B/ITGB3), alpha-V/beta-3 (ITGAV/ITGB3), and alpha-4/beta-1 (ITGA4/ITGB1) to appropriate ligands only at concentration higher than 500 nM. Weakly inhibits ADP-induced platelet aggregation.</text>
</comment>
<comment type="subunit">
    <text evidence="3">Heterodimer with EMF10A; disulfide-linked.</text>
</comment>
<comment type="subcellular location">
    <subcellularLocation>
        <location evidence="2 4">Secreted</location>
    </subcellularLocation>
</comment>
<comment type="tissue specificity">
    <text evidence="9 10">Expressed by the venom gland.</text>
</comment>
<comment type="miscellaneous">
    <text>The disintegrin belongs to the dimeric disintegrin subfamily.</text>
</comment>
<comment type="similarity">
    <text evidence="8">Belongs to the venom metalloproteinase (M12B) family. P-II subfamily. P-IIe sub-subfamily.</text>
</comment>
<comment type="caution">
    <text evidence="10">Eristocophin II appears to represent degradation product of EMF10B.</text>
</comment>
<protein>
    <recommendedName>
        <fullName evidence="5">Disintegrin EMF10B</fullName>
        <shortName evidence="6">EMF-10B</shortName>
    </recommendedName>
    <alternativeName>
        <fullName evidence="7">Eristocophin II</fullName>
    </alternativeName>
    <alternativeName>
        <fullName>Platelet aggregation activation inhibitor</fullName>
    </alternativeName>
</protein>
<name>VM2AB_ERIMA</name>